<keyword id="KW-0963">Cytoplasm</keyword>
<keyword id="KW-0460">Magnesium</keyword>
<keyword id="KW-0479">Metal-binding</keyword>
<keyword id="KW-0548">Nucleotidyltransferase</keyword>
<keyword id="KW-1185">Reference proteome</keyword>
<keyword id="KW-0694">RNA-binding</keyword>
<keyword id="KW-0808">Transferase</keyword>
<reference key="1">
    <citation type="journal article" date="2003" name="Genome Res.">
        <title>Tropheryma whipplei twist: a human pathogenic Actinobacteria with a reduced genome.</title>
        <authorList>
            <person name="Raoult D."/>
            <person name="Ogata H."/>
            <person name="Audic S."/>
            <person name="Robert C."/>
            <person name="Suhre K."/>
            <person name="Drancourt M."/>
            <person name="Claverie J.-M."/>
        </authorList>
    </citation>
    <scope>NUCLEOTIDE SEQUENCE [LARGE SCALE GENOMIC DNA]</scope>
    <source>
        <strain>Twist</strain>
    </source>
</reference>
<accession>Q83G94</accession>
<feature type="chain" id="PRO_0000329924" description="Polyribonucleotide nucleotidyltransferase">
    <location>
        <begin position="1"/>
        <end position="738"/>
    </location>
</feature>
<feature type="domain" description="KH" evidence="1">
    <location>
        <begin position="594"/>
        <end position="653"/>
    </location>
</feature>
<feature type="domain" description="S1 motif" evidence="1">
    <location>
        <begin position="665"/>
        <end position="737"/>
    </location>
</feature>
<feature type="binding site" evidence="1">
    <location>
        <position position="528"/>
    </location>
    <ligand>
        <name>Mg(2+)</name>
        <dbReference type="ChEBI" id="CHEBI:18420"/>
    </ligand>
</feature>
<feature type="binding site" evidence="1">
    <location>
        <position position="534"/>
    </location>
    <ligand>
        <name>Mg(2+)</name>
        <dbReference type="ChEBI" id="CHEBI:18420"/>
    </ligand>
</feature>
<gene>
    <name evidence="1" type="primary">pnp</name>
    <name type="ordered locus">TWT_421</name>
</gene>
<comment type="function">
    <text evidence="1">Involved in mRNA degradation. Catalyzes the phosphorolysis of single-stranded polyribonucleotides processively in the 3'- to 5'-direction.</text>
</comment>
<comment type="catalytic activity">
    <reaction evidence="1">
        <text>RNA(n+1) + phosphate = RNA(n) + a ribonucleoside 5'-diphosphate</text>
        <dbReference type="Rhea" id="RHEA:22096"/>
        <dbReference type="Rhea" id="RHEA-COMP:14527"/>
        <dbReference type="Rhea" id="RHEA-COMP:17342"/>
        <dbReference type="ChEBI" id="CHEBI:43474"/>
        <dbReference type="ChEBI" id="CHEBI:57930"/>
        <dbReference type="ChEBI" id="CHEBI:140395"/>
        <dbReference type="EC" id="2.7.7.8"/>
    </reaction>
</comment>
<comment type="cofactor">
    <cofactor evidence="1">
        <name>Mg(2+)</name>
        <dbReference type="ChEBI" id="CHEBI:18420"/>
    </cofactor>
</comment>
<comment type="subcellular location">
    <subcellularLocation>
        <location evidence="1">Cytoplasm</location>
    </subcellularLocation>
</comment>
<comment type="similarity">
    <text evidence="1">Belongs to the polyribonucleotide nucleotidyltransferase family.</text>
</comment>
<dbReference type="EC" id="2.7.7.8" evidence="1"/>
<dbReference type="EMBL" id="AE014184">
    <property type="protein sequence ID" value="AAO44518.1"/>
    <property type="molecule type" value="Genomic_DNA"/>
</dbReference>
<dbReference type="RefSeq" id="WP_011102569.1">
    <property type="nucleotide sequence ID" value="NC_004572.3"/>
</dbReference>
<dbReference type="SMR" id="Q83G94"/>
<dbReference type="STRING" id="203267.TWT_421"/>
<dbReference type="KEGG" id="twh:TWT_421"/>
<dbReference type="eggNOG" id="COG1185">
    <property type="taxonomic scope" value="Bacteria"/>
</dbReference>
<dbReference type="HOGENOM" id="CLU_004217_2_2_11"/>
<dbReference type="OrthoDB" id="9804305at2"/>
<dbReference type="Proteomes" id="UP000002200">
    <property type="component" value="Chromosome"/>
</dbReference>
<dbReference type="GO" id="GO:0005829">
    <property type="term" value="C:cytosol"/>
    <property type="evidence" value="ECO:0007669"/>
    <property type="project" value="TreeGrafter"/>
</dbReference>
<dbReference type="GO" id="GO:0000175">
    <property type="term" value="F:3'-5'-RNA exonuclease activity"/>
    <property type="evidence" value="ECO:0007669"/>
    <property type="project" value="TreeGrafter"/>
</dbReference>
<dbReference type="GO" id="GO:0000287">
    <property type="term" value="F:magnesium ion binding"/>
    <property type="evidence" value="ECO:0007669"/>
    <property type="project" value="UniProtKB-UniRule"/>
</dbReference>
<dbReference type="GO" id="GO:0004654">
    <property type="term" value="F:polyribonucleotide nucleotidyltransferase activity"/>
    <property type="evidence" value="ECO:0007669"/>
    <property type="project" value="UniProtKB-UniRule"/>
</dbReference>
<dbReference type="GO" id="GO:0003723">
    <property type="term" value="F:RNA binding"/>
    <property type="evidence" value="ECO:0007669"/>
    <property type="project" value="UniProtKB-UniRule"/>
</dbReference>
<dbReference type="GO" id="GO:0006402">
    <property type="term" value="P:mRNA catabolic process"/>
    <property type="evidence" value="ECO:0007669"/>
    <property type="project" value="UniProtKB-UniRule"/>
</dbReference>
<dbReference type="GO" id="GO:0006396">
    <property type="term" value="P:RNA processing"/>
    <property type="evidence" value="ECO:0007669"/>
    <property type="project" value="InterPro"/>
</dbReference>
<dbReference type="CDD" id="cd02393">
    <property type="entry name" value="KH-I_PNPase"/>
    <property type="match status" value="1"/>
</dbReference>
<dbReference type="CDD" id="cd11364">
    <property type="entry name" value="RNase_PH_PNPase_2"/>
    <property type="match status" value="1"/>
</dbReference>
<dbReference type="FunFam" id="3.30.1370.10:FF:000001">
    <property type="entry name" value="Polyribonucleotide nucleotidyltransferase"/>
    <property type="match status" value="1"/>
</dbReference>
<dbReference type="FunFam" id="3.30.230.70:FF:000001">
    <property type="entry name" value="Polyribonucleotide nucleotidyltransferase"/>
    <property type="match status" value="1"/>
</dbReference>
<dbReference type="FunFam" id="3.30.230.70:FF:000002">
    <property type="entry name" value="Polyribonucleotide nucleotidyltransferase"/>
    <property type="match status" value="1"/>
</dbReference>
<dbReference type="Gene3D" id="3.30.230.70">
    <property type="entry name" value="GHMP Kinase, N-terminal domain"/>
    <property type="match status" value="2"/>
</dbReference>
<dbReference type="Gene3D" id="3.30.1370.10">
    <property type="entry name" value="K Homology domain, type 1"/>
    <property type="match status" value="1"/>
</dbReference>
<dbReference type="Gene3D" id="2.40.50.140">
    <property type="entry name" value="Nucleic acid-binding proteins"/>
    <property type="match status" value="1"/>
</dbReference>
<dbReference type="HAMAP" id="MF_01595">
    <property type="entry name" value="PNPase"/>
    <property type="match status" value="1"/>
</dbReference>
<dbReference type="InterPro" id="IPR001247">
    <property type="entry name" value="ExoRNase_PH_dom1"/>
</dbReference>
<dbReference type="InterPro" id="IPR015847">
    <property type="entry name" value="ExoRNase_PH_dom2"/>
</dbReference>
<dbReference type="InterPro" id="IPR036345">
    <property type="entry name" value="ExoRNase_PH_dom2_sf"/>
</dbReference>
<dbReference type="InterPro" id="IPR014069">
    <property type="entry name" value="GPSI/PNP"/>
</dbReference>
<dbReference type="InterPro" id="IPR004087">
    <property type="entry name" value="KH_dom"/>
</dbReference>
<dbReference type="InterPro" id="IPR004088">
    <property type="entry name" value="KH_dom_type_1"/>
</dbReference>
<dbReference type="InterPro" id="IPR036612">
    <property type="entry name" value="KH_dom_type_1_sf"/>
</dbReference>
<dbReference type="InterPro" id="IPR012340">
    <property type="entry name" value="NA-bd_OB-fold"/>
</dbReference>
<dbReference type="InterPro" id="IPR012162">
    <property type="entry name" value="PNPase"/>
</dbReference>
<dbReference type="InterPro" id="IPR027408">
    <property type="entry name" value="PNPase/RNase_PH_dom_sf"/>
</dbReference>
<dbReference type="InterPro" id="IPR036456">
    <property type="entry name" value="PNPase_PH_RNA-bd_sf"/>
</dbReference>
<dbReference type="InterPro" id="IPR020568">
    <property type="entry name" value="Ribosomal_Su5_D2-typ_SF"/>
</dbReference>
<dbReference type="InterPro" id="IPR003029">
    <property type="entry name" value="S1_domain"/>
</dbReference>
<dbReference type="NCBIfam" id="TIGR03591">
    <property type="entry name" value="polynuc_phos"/>
    <property type="match status" value="1"/>
</dbReference>
<dbReference type="NCBIfam" id="TIGR02696">
    <property type="entry name" value="pppGpp_PNP"/>
    <property type="match status" value="1"/>
</dbReference>
<dbReference type="NCBIfam" id="NF008805">
    <property type="entry name" value="PRK11824.1"/>
    <property type="match status" value="1"/>
</dbReference>
<dbReference type="PANTHER" id="PTHR11252">
    <property type="entry name" value="POLYRIBONUCLEOTIDE NUCLEOTIDYLTRANSFERASE"/>
    <property type="match status" value="1"/>
</dbReference>
<dbReference type="PANTHER" id="PTHR11252:SF0">
    <property type="entry name" value="POLYRIBONUCLEOTIDE NUCLEOTIDYLTRANSFERASE 1, MITOCHONDRIAL"/>
    <property type="match status" value="1"/>
</dbReference>
<dbReference type="Pfam" id="PF00013">
    <property type="entry name" value="KH_1"/>
    <property type="match status" value="1"/>
</dbReference>
<dbReference type="Pfam" id="PF01138">
    <property type="entry name" value="RNase_PH"/>
    <property type="match status" value="2"/>
</dbReference>
<dbReference type="Pfam" id="PF03725">
    <property type="entry name" value="RNase_PH_C"/>
    <property type="match status" value="1"/>
</dbReference>
<dbReference type="Pfam" id="PF00575">
    <property type="entry name" value="S1"/>
    <property type="match status" value="1"/>
</dbReference>
<dbReference type="PIRSF" id="PIRSF005499">
    <property type="entry name" value="PNPase"/>
    <property type="match status" value="1"/>
</dbReference>
<dbReference type="SMART" id="SM00322">
    <property type="entry name" value="KH"/>
    <property type="match status" value="1"/>
</dbReference>
<dbReference type="SMART" id="SM00316">
    <property type="entry name" value="S1"/>
    <property type="match status" value="1"/>
</dbReference>
<dbReference type="SUPFAM" id="SSF54791">
    <property type="entry name" value="Eukaryotic type KH-domain (KH-domain type I)"/>
    <property type="match status" value="1"/>
</dbReference>
<dbReference type="SUPFAM" id="SSF46915">
    <property type="entry name" value="Polynucleotide phosphorylase/guanosine pentaphosphate synthase (PNPase/GPSI), domain 3"/>
    <property type="match status" value="1"/>
</dbReference>
<dbReference type="SUPFAM" id="SSF55666">
    <property type="entry name" value="Ribonuclease PH domain 2-like"/>
    <property type="match status" value="2"/>
</dbReference>
<dbReference type="SUPFAM" id="SSF54211">
    <property type="entry name" value="Ribosomal protein S5 domain 2-like"/>
    <property type="match status" value="2"/>
</dbReference>
<dbReference type="PROSITE" id="PS50084">
    <property type="entry name" value="KH_TYPE_1"/>
    <property type="match status" value="1"/>
</dbReference>
<dbReference type="PROSITE" id="PS50126">
    <property type="entry name" value="S1"/>
    <property type="match status" value="1"/>
</dbReference>
<evidence type="ECO:0000255" key="1">
    <source>
        <dbReference type="HAMAP-Rule" id="MF_01595"/>
    </source>
</evidence>
<name>PNP_TROWT</name>
<proteinExistence type="inferred from homology"/>
<sequence>MDDVQFSEGVIDNGRFGTRTIRFETGRLARQAQGSVVAYLDGETMLLSSTSVGKQPKEDCDFFPLTVDVEERSYAAGKIPGSYFRREGRPSTEAILACRLIDRPLRPSFNAGLRNEVQVIVTVLSIAPGEFYEALAINAASASTLVSGLPFSGPIGGVRLALIDGQWVAFPRYEDLSGAVFDLTVAGRVFVNESGKEDIAIMMVEAEATESAWDLIHSHGAKKPNEEVIEEGIESAKVFIRTLCDIQRDLASKLSLSHTEPDLYPDYSDSVHSFVEGLVKSDLEKVYRGNHDSGYAPNALSASDEIKQKAYDAFHDAVLSGRFDQDSLSQFPHAYKAVLKDVVRTCVLEGFARMDGRGLSDIRPLDAEVQVVPRVHGSAVFQRGETQVLGVTTLNMLKMEQQIDSLAPIVSKRYIHHYNFPPYSTGEVGRVGSPKRREIGHGFLAERALVPVLPSREDFPYAIRQVSEALGSNGSTSMGSVCASTLSLLNAGVPLRAPVAGIAMGLISGRVDGEMRYVTLTDISGSEDALGDMDFKVAGTSDFITALQLDTKLDGIPAHVLSEALAHARSARLAILDVLTRVIDSPDQMSEYAPRVVRVKIPVQKIGELIGPKGKVINSIQDETGAEISIEDDGTVYIGSSQADSSEKAVAMVNSIVNPVEPCVGSQFLGTVVKNMPFGSFISLVPGKDGLLHISEIRKMVDGRHLESVDEVLSVGQKVLVEVSKIDDRGKLCLVAVK</sequence>
<protein>
    <recommendedName>
        <fullName evidence="1">Polyribonucleotide nucleotidyltransferase</fullName>
        <ecNumber evidence="1">2.7.7.8</ecNumber>
    </recommendedName>
    <alternativeName>
        <fullName evidence="1">Polynucleotide phosphorylase</fullName>
        <shortName evidence="1">PNPase</shortName>
    </alternativeName>
</protein>
<organism>
    <name type="scientific">Tropheryma whipplei (strain Twist)</name>
    <name type="common">Whipple's bacillus</name>
    <dbReference type="NCBI Taxonomy" id="203267"/>
    <lineage>
        <taxon>Bacteria</taxon>
        <taxon>Bacillati</taxon>
        <taxon>Actinomycetota</taxon>
        <taxon>Actinomycetes</taxon>
        <taxon>Micrococcales</taxon>
        <taxon>Tropherymataceae</taxon>
        <taxon>Tropheryma</taxon>
    </lineage>
</organism>